<proteinExistence type="evidence at protein level"/>
<dbReference type="EMBL" id="AY360172">
    <property type="protein sequence ID" value="AAQ98857.1"/>
    <property type="molecule type" value="mRNA"/>
</dbReference>
<dbReference type="EMBL" id="AK223559">
    <property type="protein sequence ID" value="BAD97279.1"/>
    <property type="molecule type" value="mRNA"/>
</dbReference>
<dbReference type="EMBL" id="AL358472">
    <property type="status" value="NOT_ANNOTATED_CDS"/>
    <property type="molecule type" value="Genomic_DNA"/>
</dbReference>
<dbReference type="EMBL" id="BC028886">
    <property type="protein sequence ID" value="AAH28886.1"/>
    <property type="molecule type" value="mRNA"/>
</dbReference>
<dbReference type="EMBL" id="BC053562">
    <property type="protein sequence ID" value="AAH53562.1"/>
    <property type="molecule type" value="mRNA"/>
</dbReference>
<dbReference type="CCDS" id="CCDS30875.1"/>
<dbReference type="RefSeq" id="NP_859066.1">
    <property type="nucleotide sequence ID" value="NM_181715.3"/>
</dbReference>
<dbReference type="PDB" id="4HTM">
    <property type="method" value="X-ray"/>
    <property type="resolution" value="2.00 A"/>
    <property type="chains" value="A=18-50"/>
</dbReference>
<dbReference type="PDBsum" id="4HTM"/>
<dbReference type="SMR" id="Q53ET0"/>
<dbReference type="BioGRID" id="128308">
    <property type="interactions" value="66"/>
</dbReference>
<dbReference type="DIP" id="DIP-29950N"/>
<dbReference type="FunCoup" id="Q53ET0">
    <property type="interactions" value="3105"/>
</dbReference>
<dbReference type="IntAct" id="Q53ET0">
    <property type="interactions" value="33"/>
</dbReference>
<dbReference type="MINT" id="Q53ET0"/>
<dbReference type="STRING" id="9606.ENSP00000357622"/>
<dbReference type="GlyCosmos" id="Q53ET0">
    <property type="glycosylation" value="10 sites, 2 glycans"/>
</dbReference>
<dbReference type="GlyGen" id="Q53ET0">
    <property type="glycosylation" value="14 sites, 2 O-linked glycans (11 sites)"/>
</dbReference>
<dbReference type="iPTMnet" id="Q53ET0"/>
<dbReference type="PhosphoSitePlus" id="Q53ET0"/>
<dbReference type="BioMuta" id="CRTC2"/>
<dbReference type="DMDM" id="167009135"/>
<dbReference type="jPOST" id="Q53ET0"/>
<dbReference type="MassIVE" id="Q53ET0"/>
<dbReference type="PaxDb" id="9606-ENSP00000357622"/>
<dbReference type="PeptideAtlas" id="Q53ET0"/>
<dbReference type="ProteomicsDB" id="62448"/>
<dbReference type="Pumba" id="Q53ET0"/>
<dbReference type="Antibodypedia" id="34141">
    <property type="antibodies" value="573 antibodies from 40 providers"/>
</dbReference>
<dbReference type="DNASU" id="200186"/>
<dbReference type="Ensembl" id="ENST00000368633.2">
    <property type="protein sequence ID" value="ENSP00000357622.1"/>
    <property type="gene ID" value="ENSG00000160741.17"/>
</dbReference>
<dbReference type="GeneID" id="200186"/>
<dbReference type="KEGG" id="hsa:200186"/>
<dbReference type="MANE-Select" id="ENST00000368633.2">
    <property type="protein sequence ID" value="ENSP00000357622.1"/>
    <property type="RefSeq nucleotide sequence ID" value="NM_181715.3"/>
    <property type="RefSeq protein sequence ID" value="NP_859066.1"/>
</dbReference>
<dbReference type="UCSC" id="uc057leo.1">
    <property type="organism name" value="human"/>
</dbReference>
<dbReference type="AGR" id="HGNC:27301"/>
<dbReference type="CTD" id="200186"/>
<dbReference type="DisGeNET" id="200186"/>
<dbReference type="GeneCards" id="CRTC2"/>
<dbReference type="HGNC" id="HGNC:27301">
    <property type="gene designation" value="CRTC2"/>
</dbReference>
<dbReference type="HPA" id="ENSG00000160741">
    <property type="expression patterns" value="Low tissue specificity"/>
</dbReference>
<dbReference type="MIM" id="608972">
    <property type="type" value="gene"/>
</dbReference>
<dbReference type="neXtProt" id="NX_Q53ET0"/>
<dbReference type="OpenTargets" id="ENSG00000160741"/>
<dbReference type="PharmGKB" id="PA142672073"/>
<dbReference type="VEuPathDB" id="HostDB:ENSG00000160741"/>
<dbReference type="eggNOG" id="ENOG502QVWA">
    <property type="taxonomic scope" value="Eukaryota"/>
</dbReference>
<dbReference type="GeneTree" id="ENSGT00390000010652"/>
<dbReference type="InParanoid" id="Q53ET0"/>
<dbReference type="OMA" id="WARHALP"/>
<dbReference type="OrthoDB" id="8947034at2759"/>
<dbReference type="PAN-GO" id="Q53ET0">
    <property type="GO annotations" value="5 GO annotations based on evolutionary models"/>
</dbReference>
<dbReference type="PhylomeDB" id="Q53ET0"/>
<dbReference type="TreeFam" id="TF321571"/>
<dbReference type="PathwayCommons" id="Q53ET0"/>
<dbReference type="Reactome" id="R-HSA-2151201">
    <property type="pathway name" value="Transcriptional activation of mitochondrial biogenesis"/>
</dbReference>
<dbReference type="Reactome" id="R-HSA-400253">
    <property type="pathway name" value="Circadian Clock"/>
</dbReference>
<dbReference type="Reactome" id="R-HSA-9707616">
    <property type="pathway name" value="Heme signaling"/>
</dbReference>
<dbReference type="SignaLink" id="Q53ET0"/>
<dbReference type="SIGNOR" id="Q53ET0"/>
<dbReference type="BioGRID-ORCS" id="200186">
    <property type="hits" value="35 hits in 1168 CRISPR screens"/>
</dbReference>
<dbReference type="ChiTaRS" id="CRTC2">
    <property type="organism name" value="human"/>
</dbReference>
<dbReference type="EvolutionaryTrace" id="Q53ET0"/>
<dbReference type="GeneWiki" id="CRTC2"/>
<dbReference type="GenomeRNAi" id="200186"/>
<dbReference type="Pharos" id="Q53ET0">
    <property type="development level" value="Tbio"/>
</dbReference>
<dbReference type="PRO" id="PR:Q53ET0"/>
<dbReference type="Proteomes" id="UP000005640">
    <property type="component" value="Chromosome 1"/>
</dbReference>
<dbReference type="RNAct" id="Q53ET0">
    <property type="molecule type" value="protein"/>
</dbReference>
<dbReference type="Bgee" id="ENSG00000160741">
    <property type="expression patterns" value="Expressed in granulocyte and 142 other cell types or tissues"/>
</dbReference>
<dbReference type="ExpressionAtlas" id="Q53ET0">
    <property type="expression patterns" value="baseline and differential"/>
</dbReference>
<dbReference type="GO" id="GO:0005737">
    <property type="term" value="C:cytoplasm"/>
    <property type="evidence" value="ECO:0000250"/>
    <property type="project" value="UniProtKB"/>
</dbReference>
<dbReference type="GO" id="GO:0070062">
    <property type="term" value="C:extracellular exosome"/>
    <property type="evidence" value="ECO:0007005"/>
    <property type="project" value="UniProtKB"/>
</dbReference>
<dbReference type="GO" id="GO:0005654">
    <property type="term" value="C:nucleoplasm"/>
    <property type="evidence" value="ECO:0000314"/>
    <property type="project" value="HPA"/>
</dbReference>
<dbReference type="GO" id="GO:0005634">
    <property type="term" value="C:nucleus"/>
    <property type="evidence" value="ECO:0000318"/>
    <property type="project" value="GO_Central"/>
</dbReference>
<dbReference type="GO" id="GO:0008140">
    <property type="term" value="F:cAMP response element binding protein binding"/>
    <property type="evidence" value="ECO:0000318"/>
    <property type="project" value="GO_Central"/>
</dbReference>
<dbReference type="GO" id="GO:0003713">
    <property type="term" value="F:transcription coactivator activity"/>
    <property type="evidence" value="ECO:0000318"/>
    <property type="project" value="GO_Central"/>
</dbReference>
<dbReference type="GO" id="GO:0071320">
    <property type="term" value="P:cellular response to cAMP"/>
    <property type="evidence" value="ECO:0000318"/>
    <property type="project" value="GO_Central"/>
</dbReference>
<dbReference type="GO" id="GO:0006094">
    <property type="term" value="P:gluconeogenesis"/>
    <property type="evidence" value="ECO:0000250"/>
    <property type="project" value="UniProtKB"/>
</dbReference>
<dbReference type="GO" id="GO:0042593">
    <property type="term" value="P:glucose homeostasis"/>
    <property type="evidence" value="ECO:0000250"/>
    <property type="project" value="UniProtKB"/>
</dbReference>
<dbReference type="GO" id="GO:0032793">
    <property type="term" value="P:positive regulation of CREB transcription factor activity"/>
    <property type="evidence" value="ECO:0000250"/>
    <property type="project" value="UniProtKB"/>
</dbReference>
<dbReference type="GO" id="GO:0045944">
    <property type="term" value="P:positive regulation of transcription by RNA polymerase II"/>
    <property type="evidence" value="ECO:0000318"/>
    <property type="project" value="GO_Central"/>
</dbReference>
<dbReference type="GO" id="GO:0051289">
    <property type="term" value="P:protein homotetramerization"/>
    <property type="evidence" value="ECO:0007669"/>
    <property type="project" value="InterPro"/>
</dbReference>
<dbReference type="InterPro" id="IPR024786">
    <property type="entry name" value="TORC"/>
</dbReference>
<dbReference type="InterPro" id="IPR024785">
    <property type="entry name" value="TORC_C"/>
</dbReference>
<dbReference type="InterPro" id="IPR024784">
    <property type="entry name" value="TORC_M"/>
</dbReference>
<dbReference type="InterPro" id="IPR024783">
    <property type="entry name" value="TORC_N"/>
</dbReference>
<dbReference type="PANTHER" id="PTHR13589">
    <property type="entry name" value="CREB-REGULATED TRANSCRIPTION COACTIVATOR"/>
    <property type="match status" value="1"/>
</dbReference>
<dbReference type="PANTHER" id="PTHR13589:SF6">
    <property type="entry name" value="CREB-REGULATED TRANSCRIPTION COACTIVATOR 2"/>
    <property type="match status" value="1"/>
</dbReference>
<dbReference type="Pfam" id="PF12886">
    <property type="entry name" value="TORC_C"/>
    <property type="match status" value="1"/>
</dbReference>
<dbReference type="Pfam" id="PF12885">
    <property type="entry name" value="TORC_M"/>
    <property type="match status" value="1"/>
</dbReference>
<dbReference type="Pfam" id="PF12884">
    <property type="entry name" value="TORC_N"/>
    <property type="match status" value="1"/>
</dbReference>
<reference key="1">
    <citation type="journal article" date="2003" name="Proc. Natl. Acad. Sci. U.S.A.">
        <title>Identification of a family of cAMP response element-binding protein coactivators by genome-scale functional analysis in mammalian cells.</title>
        <authorList>
            <person name="Iourgenko V."/>
            <person name="Zhang W."/>
            <person name="Mickanin C."/>
            <person name="Daly I."/>
            <person name="Jiang C."/>
            <person name="Hexham J.M."/>
            <person name="Orth A.P."/>
            <person name="Miraglia L."/>
            <person name="Meltzer J."/>
            <person name="Garza D."/>
            <person name="Chirn G.-W."/>
            <person name="McWhinnie E."/>
            <person name="Cohen D."/>
            <person name="Skelton J."/>
            <person name="Terry R."/>
            <person name="Yu Y."/>
            <person name="Bodian D."/>
            <person name="Buxton F.P."/>
            <person name="Zhu J."/>
            <person name="Song C."/>
            <person name="Labow M.A."/>
        </authorList>
    </citation>
    <scope>NUCLEOTIDE SEQUENCE [MRNA]</scope>
    <scope>VARIANT CYS-379</scope>
    <scope>FUNCTION</scope>
</reference>
<reference key="2">
    <citation type="submission" date="2005-04" db="EMBL/GenBank/DDBJ databases">
        <authorList>
            <person name="Totoki Y."/>
            <person name="Toyoda A."/>
            <person name="Takeda T."/>
            <person name="Sakaki Y."/>
            <person name="Tanaka A."/>
            <person name="Yokoyama S."/>
        </authorList>
    </citation>
    <scope>NUCLEOTIDE SEQUENCE [LARGE SCALE MRNA]</scope>
    <source>
        <tissue>Brain</tissue>
    </source>
</reference>
<reference key="3">
    <citation type="journal article" date="2006" name="Nature">
        <title>The DNA sequence and biological annotation of human chromosome 1.</title>
        <authorList>
            <person name="Gregory S.G."/>
            <person name="Barlow K.F."/>
            <person name="McLay K.E."/>
            <person name="Kaul R."/>
            <person name="Swarbreck D."/>
            <person name="Dunham A."/>
            <person name="Scott C.E."/>
            <person name="Howe K.L."/>
            <person name="Woodfine K."/>
            <person name="Spencer C.C.A."/>
            <person name="Jones M.C."/>
            <person name="Gillson C."/>
            <person name="Searle S."/>
            <person name="Zhou Y."/>
            <person name="Kokocinski F."/>
            <person name="McDonald L."/>
            <person name="Evans R."/>
            <person name="Phillips K."/>
            <person name="Atkinson A."/>
            <person name="Cooper R."/>
            <person name="Jones C."/>
            <person name="Hall R.E."/>
            <person name="Andrews T.D."/>
            <person name="Lloyd C."/>
            <person name="Ainscough R."/>
            <person name="Almeida J.P."/>
            <person name="Ambrose K.D."/>
            <person name="Anderson F."/>
            <person name="Andrew R.W."/>
            <person name="Ashwell R.I.S."/>
            <person name="Aubin K."/>
            <person name="Babbage A.K."/>
            <person name="Bagguley C.L."/>
            <person name="Bailey J."/>
            <person name="Beasley H."/>
            <person name="Bethel G."/>
            <person name="Bird C.P."/>
            <person name="Bray-Allen S."/>
            <person name="Brown J.Y."/>
            <person name="Brown A.J."/>
            <person name="Buckley D."/>
            <person name="Burton J."/>
            <person name="Bye J."/>
            <person name="Carder C."/>
            <person name="Chapman J.C."/>
            <person name="Clark S.Y."/>
            <person name="Clarke G."/>
            <person name="Clee C."/>
            <person name="Cobley V."/>
            <person name="Collier R.E."/>
            <person name="Corby N."/>
            <person name="Coville G.J."/>
            <person name="Davies J."/>
            <person name="Deadman R."/>
            <person name="Dunn M."/>
            <person name="Earthrowl M."/>
            <person name="Ellington A.G."/>
            <person name="Errington H."/>
            <person name="Frankish A."/>
            <person name="Frankland J."/>
            <person name="French L."/>
            <person name="Garner P."/>
            <person name="Garnett J."/>
            <person name="Gay L."/>
            <person name="Ghori M.R.J."/>
            <person name="Gibson R."/>
            <person name="Gilby L.M."/>
            <person name="Gillett W."/>
            <person name="Glithero R.J."/>
            <person name="Grafham D.V."/>
            <person name="Griffiths C."/>
            <person name="Griffiths-Jones S."/>
            <person name="Grocock R."/>
            <person name="Hammond S."/>
            <person name="Harrison E.S.I."/>
            <person name="Hart E."/>
            <person name="Haugen E."/>
            <person name="Heath P.D."/>
            <person name="Holmes S."/>
            <person name="Holt K."/>
            <person name="Howden P.J."/>
            <person name="Hunt A.R."/>
            <person name="Hunt S.E."/>
            <person name="Hunter G."/>
            <person name="Isherwood J."/>
            <person name="James R."/>
            <person name="Johnson C."/>
            <person name="Johnson D."/>
            <person name="Joy A."/>
            <person name="Kay M."/>
            <person name="Kershaw J.K."/>
            <person name="Kibukawa M."/>
            <person name="Kimberley A.M."/>
            <person name="King A."/>
            <person name="Knights A.J."/>
            <person name="Lad H."/>
            <person name="Laird G."/>
            <person name="Lawlor S."/>
            <person name="Leongamornlert D.A."/>
            <person name="Lloyd D.M."/>
            <person name="Loveland J."/>
            <person name="Lovell J."/>
            <person name="Lush M.J."/>
            <person name="Lyne R."/>
            <person name="Martin S."/>
            <person name="Mashreghi-Mohammadi M."/>
            <person name="Matthews L."/>
            <person name="Matthews N.S.W."/>
            <person name="McLaren S."/>
            <person name="Milne S."/>
            <person name="Mistry S."/>
            <person name="Moore M.J.F."/>
            <person name="Nickerson T."/>
            <person name="O'Dell C.N."/>
            <person name="Oliver K."/>
            <person name="Palmeiri A."/>
            <person name="Palmer S.A."/>
            <person name="Parker A."/>
            <person name="Patel D."/>
            <person name="Pearce A.V."/>
            <person name="Peck A.I."/>
            <person name="Pelan S."/>
            <person name="Phelps K."/>
            <person name="Phillimore B.J."/>
            <person name="Plumb R."/>
            <person name="Rajan J."/>
            <person name="Raymond C."/>
            <person name="Rouse G."/>
            <person name="Saenphimmachak C."/>
            <person name="Sehra H.K."/>
            <person name="Sheridan E."/>
            <person name="Shownkeen R."/>
            <person name="Sims S."/>
            <person name="Skuce C.D."/>
            <person name="Smith M."/>
            <person name="Steward C."/>
            <person name="Subramanian S."/>
            <person name="Sycamore N."/>
            <person name="Tracey A."/>
            <person name="Tromans A."/>
            <person name="Van Helmond Z."/>
            <person name="Wall M."/>
            <person name="Wallis J.M."/>
            <person name="White S."/>
            <person name="Whitehead S.L."/>
            <person name="Wilkinson J.E."/>
            <person name="Willey D.L."/>
            <person name="Williams H."/>
            <person name="Wilming L."/>
            <person name="Wray P.W."/>
            <person name="Wu Z."/>
            <person name="Coulson A."/>
            <person name="Vaudin M."/>
            <person name="Sulston J.E."/>
            <person name="Durbin R.M."/>
            <person name="Hubbard T."/>
            <person name="Wooster R."/>
            <person name="Dunham I."/>
            <person name="Carter N.P."/>
            <person name="McVean G."/>
            <person name="Ross M.T."/>
            <person name="Harrow J."/>
            <person name="Olson M.V."/>
            <person name="Beck S."/>
            <person name="Rogers J."/>
            <person name="Bentley D.R."/>
        </authorList>
    </citation>
    <scope>NUCLEOTIDE SEQUENCE [LARGE SCALE GENOMIC DNA]</scope>
    <source>
        <tissue>Brain</tissue>
    </source>
</reference>
<reference key="4">
    <citation type="journal article" date="2004" name="Genome Res.">
        <title>The status, quality, and expansion of the NIH full-length cDNA project: the Mammalian Gene Collection (MGC).</title>
        <authorList>
            <consortium name="The MGC Project Team"/>
        </authorList>
    </citation>
    <scope>NUCLEOTIDE SEQUENCE [LARGE SCALE MRNA]</scope>
    <source>
        <tissue>PNS</tissue>
        <tissue>Urinary bladder</tissue>
    </source>
</reference>
<reference key="5">
    <citation type="journal article" date="2003" name="Mol. Cell">
        <title>TORCs: transducers of regulated CREB activity.</title>
        <authorList>
            <person name="Conkright M.D."/>
            <person name="Canettieri G."/>
            <person name="Screaton R."/>
            <person name="Guzman E."/>
            <person name="Miraglia L."/>
            <person name="Hogenesch J.B."/>
            <person name="Montminy M."/>
        </authorList>
    </citation>
    <scope>FUNCTION</scope>
    <scope>TISSUE SPECIFICITY</scope>
</reference>
<reference key="6">
    <citation type="journal article" date="2004" name="Cell">
        <title>The CREB coactivator TORC2 functions as a calcium- and cAMP-sensitive coincidence detector.</title>
        <authorList>
            <person name="Screaton R.A."/>
            <person name="Conkright M.D."/>
            <person name="Katoh Y."/>
            <person name="Best J.L."/>
            <person name="Canettieri G."/>
            <person name="Jeffries S."/>
            <person name="Guzman E."/>
            <person name="Niessen S."/>
            <person name="Yates J.R. III"/>
            <person name="Takemori H."/>
            <person name="Okamoto M."/>
            <person name="Montminy M."/>
        </authorList>
    </citation>
    <scope>INTERACTION WITH CREB1; SIK2; PPP3CA; YWHAB AND YWHAG</scope>
    <scope>TISSUE SPECIFICITY</scope>
    <scope>SUBCELLULAR LOCATION</scope>
    <scope>FUNCTION</scope>
    <scope>PHOSPHORYLATION AT SER-70; SER-90; SER-136; SER-171; SER-306; SER-368; SER-393; SER-433; SER-456; SER-489; SER-492 AND SER-613</scope>
    <scope>IDENTIFICATION BY MASS SPECTROMETRY</scope>
    <scope>MUTAGENESIS OF SER-171 AND SER-368</scope>
</reference>
<reference key="7">
    <citation type="journal article" date="2004" name="Curr. Biol.">
        <title>Activation of cAMP response element-mediated gene expression by regulated nuclear transport of TORC proteins.</title>
        <authorList>
            <person name="Bittinger M.A."/>
            <person name="McWhinnie E."/>
            <person name="Meltzer J."/>
            <person name="Iourgenko V."/>
            <person name="Latario B."/>
            <person name="Liu X."/>
            <person name="Chen C.H."/>
            <person name="Song C."/>
            <person name="Garza D."/>
            <person name="Labow M."/>
        </authorList>
    </citation>
    <scope>SUBCELLULAR LOCATION</scope>
    <scope>PHOSPHORYLATION</scope>
</reference>
<reference key="8">
    <citation type="journal article" date="2006" name="FEBS J.">
        <title>Silencing the constitutive active transcription factor CREB by the LKB1-SIK signaling cascade.</title>
        <authorList>
            <person name="Katoh Y."/>
            <person name="Takemori H."/>
            <person name="Lin X.-Z."/>
            <person name="Tamura M."/>
            <person name="Muraoka M."/>
            <person name="Satoh T."/>
            <person name="Tsuchiya Y."/>
            <person name="Min L."/>
            <person name="Doi J."/>
            <person name="Miyauchi A."/>
            <person name="Witters L.A."/>
            <person name="Nakamura H."/>
            <person name="Okamoto M."/>
        </authorList>
    </citation>
    <scope>FUNCTION</scope>
    <scope>SUBCELLULAR LOCATION</scope>
    <scope>PHOSPHORYLATION AT SER-171</scope>
    <scope>MUTAGENESIS OF SER-171</scope>
</reference>
<reference key="9">
    <citation type="journal article" date="2006" name="J. Virol.">
        <title>TORC1 and TORC2 coactivators are required for tax activation of the human T-cell leukemia virus type 1 long terminal repeats.</title>
        <authorList>
            <person name="Siu Y.-T."/>
            <person name="Chin K.-T."/>
            <person name="Siu K.-L."/>
            <person name="Yee Wai Choy E."/>
            <person name="Jeang K.-T."/>
            <person name="Jin D.-Y."/>
        </authorList>
    </citation>
    <scope>INTERACTION WITH HTLV-1 TAX (MICROBIAL INFECTION)</scope>
    <scope>FUNCTION</scope>
</reference>
<reference key="10">
    <citation type="journal article" date="2006" name="Nat. Biotechnol.">
        <title>A probability-based approach for high-throughput protein phosphorylation analysis and site localization.</title>
        <authorList>
            <person name="Beausoleil S.A."/>
            <person name="Villen J."/>
            <person name="Gerber S.A."/>
            <person name="Rush J."/>
            <person name="Gygi S.P."/>
        </authorList>
    </citation>
    <scope>PHOSPHORYLATION [LARGE SCALE ANALYSIS] AT SER-433</scope>
    <scope>IDENTIFICATION BY MASS SPECTROMETRY [LARGE SCALE ANALYSIS]</scope>
    <source>
        <tissue>Cervix carcinoma</tissue>
    </source>
</reference>
<reference key="11">
    <citation type="journal article" date="2006" name="Proc. Natl. Acad. Sci. U.S.A.">
        <title>Transducer of regulated CREB-binding proteins (TORCs) induce PGC-1alpha transcription and mitochondrial biogenesis in muscle cells.</title>
        <authorList>
            <person name="Wu Z."/>
            <person name="Huang X."/>
            <person name="Feng Y."/>
            <person name="Handschin C."/>
            <person name="Feng Y."/>
            <person name="Gullicksen P.S."/>
            <person name="Bare O."/>
            <person name="Labow M."/>
            <person name="Spiegelman B."/>
            <person name="Stevenson S.C."/>
        </authorList>
    </citation>
    <scope>FUNCTION</scope>
    <scope>TISSUE SPECIFICITY</scope>
</reference>
<reference key="12">
    <citation type="journal article" date="2007" name="Mol. Cell. Endocrinol.">
        <title>Dephosphorylation of TORC initiates expression of the StAR gene.</title>
        <authorList>
            <person name="Takemori H."/>
            <person name="Kanematsu M."/>
            <person name="Kajimura J."/>
            <person name="Hatano O."/>
            <person name="Katoh Y."/>
            <person name="Lin X.-Z."/>
            <person name="Min L."/>
            <person name="Yamazaki T."/>
            <person name="Doi J."/>
            <person name="Okamoto M."/>
        </authorList>
    </citation>
    <scope>FUNCTION</scope>
    <scope>PHOSPHORYLATION AT SER-171</scope>
</reference>
<reference key="13">
    <citation type="journal article" date="2008" name="J. Proteome Res.">
        <title>Combining protein-based IMAC, peptide-based IMAC, and MudPIT for efficient phosphoproteomic analysis.</title>
        <authorList>
            <person name="Cantin G.T."/>
            <person name="Yi W."/>
            <person name="Lu B."/>
            <person name="Park S.K."/>
            <person name="Xu T."/>
            <person name="Lee J.-D."/>
            <person name="Yates J.R. III"/>
        </authorList>
    </citation>
    <scope>PHOSPHORYLATION [LARGE SCALE ANALYSIS] AT SER-433</scope>
    <scope>IDENTIFICATION BY MASS SPECTROMETRY [LARGE SCALE ANALYSIS]</scope>
    <source>
        <tissue>Cervix carcinoma</tissue>
    </source>
</reference>
<reference key="14">
    <citation type="journal article" date="2008" name="Proc. Natl. Acad. Sci. U.S.A.">
        <title>Glucose controls CREB activity in islet cells via regulated phosphorylation of TORC2.</title>
        <authorList>
            <person name="Jansson D."/>
            <person name="Ng A.C."/>
            <person name="Fu A."/>
            <person name="Depatie C."/>
            <person name="Al Azzabi M."/>
            <person name="Screaton R.A."/>
        </authorList>
    </citation>
    <scope>PHOSPHORYLATION AT SER-171 AND SER-274</scope>
    <scope>INTERACTION WITH 14-3-3</scope>
    <scope>MUTAGENESIS OF SER-171; SER-274 AND SER-368</scope>
</reference>
<reference key="15">
    <citation type="journal article" date="2008" name="Proc. Natl. Acad. Sci. U.S.A.">
        <title>A quantitative atlas of mitotic phosphorylation.</title>
        <authorList>
            <person name="Dephoure N."/>
            <person name="Zhou C."/>
            <person name="Villen J."/>
            <person name="Beausoleil S.A."/>
            <person name="Bakalarski C.E."/>
            <person name="Elledge S.J."/>
            <person name="Gygi S.P."/>
        </authorList>
    </citation>
    <scope>PHOSPHORYLATION [LARGE SCALE ANALYSIS] AT SER-70; SER-86; SER-90; SER-136; SER-433; THR-501; SER-613 AND SER-624</scope>
    <scope>IDENTIFICATION BY MASS SPECTROMETRY [LARGE SCALE ANALYSIS]</scope>
    <source>
        <tissue>Cervix carcinoma</tissue>
    </source>
</reference>
<reference key="16">
    <citation type="journal article" date="2009" name="Anal. Chem.">
        <title>Lys-N and trypsin cover complementary parts of the phosphoproteome in a refined SCX-based approach.</title>
        <authorList>
            <person name="Gauci S."/>
            <person name="Helbig A.O."/>
            <person name="Slijper M."/>
            <person name="Krijgsveld J."/>
            <person name="Heck A.J."/>
            <person name="Mohammed S."/>
        </authorList>
    </citation>
    <scope>ACETYLATION [LARGE SCALE ANALYSIS] AT ALA-2</scope>
    <scope>CLEAVAGE OF INITIATOR METHIONINE [LARGE SCALE ANALYSIS]</scope>
    <scope>IDENTIFICATION BY MASS SPECTROMETRY [LARGE SCALE ANALYSIS]</scope>
</reference>
<reference key="17">
    <citation type="journal article" date="2009" name="Sci. Signal.">
        <title>Quantitative phosphoproteomic analysis of T cell receptor signaling reveals system-wide modulation of protein-protein interactions.</title>
        <authorList>
            <person name="Mayya V."/>
            <person name="Lundgren D.H."/>
            <person name="Hwang S.-I."/>
            <person name="Rezaul K."/>
            <person name="Wu L."/>
            <person name="Eng J.K."/>
            <person name="Rodionov V."/>
            <person name="Han D.K."/>
        </authorList>
    </citation>
    <scope>PHOSPHORYLATION [LARGE SCALE ANALYSIS] AT SER-70; SER-86; SER-90; THR-192; SER-433; TYR-488; SER-490; SER-613 AND SER-624</scope>
    <scope>IDENTIFICATION BY MASS SPECTROMETRY [LARGE SCALE ANALYSIS]</scope>
    <source>
        <tissue>Leukemic T-cell</tissue>
    </source>
</reference>
<reference key="18">
    <citation type="journal article" date="2010" name="Sci. Signal.">
        <title>Quantitative phosphoproteomics reveals widespread full phosphorylation site occupancy during mitosis.</title>
        <authorList>
            <person name="Olsen J.V."/>
            <person name="Vermeulen M."/>
            <person name="Santamaria A."/>
            <person name="Kumar C."/>
            <person name="Miller M.L."/>
            <person name="Jensen L.J."/>
            <person name="Gnad F."/>
            <person name="Cox J."/>
            <person name="Jensen T.S."/>
            <person name="Nigg E.A."/>
            <person name="Brunak S."/>
            <person name="Mann M."/>
        </authorList>
    </citation>
    <scope>PHOSPHORYLATION [LARGE SCALE ANALYSIS] AT THR-501; SER-613 AND SER-624</scope>
    <scope>IDENTIFICATION BY MASS SPECTROMETRY [LARGE SCALE ANALYSIS]</scope>
    <source>
        <tissue>Cervix carcinoma</tissue>
    </source>
</reference>
<reference key="19">
    <citation type="journal article" date="2011" name="BMC Syst. Biol.">
        <title>Initial characterization of the human central proteome.</title>
        <authorList>
            <person name="Burkard T.R."/>
            <person name="Planyavsky M."/>
            <person name="Kaupe I."/>
            <person name="Breitwieser F.P."/>
            <person name="Buerckstuemmer T."/>
            <person name="Bennett K.L."/>
            <person name="Superti-Furga G."/>
            <person name="Colinge J."/>
        </authorList>
    </citation>
    <scope>IDENTIFICATION BY MASS SPECTROMETRY [LARGE SCALE ANALYSIS]</scope>
</reference>
<reference key="20">
    <citation type="journal article" date="2011" name="Sci. Signal.">
        <title>System-wide temporal characterization of the proteome and phosphoproteome of human embryonic stem cell differentiation.</title>
        <authorList>
            <person name="Rigbolt K.T."/>
            <person name="Prokhorova T.A."/>
            <person name="Akimov V."/>
            <person name="Henningsen J."/>
            <person name="Johansen P.T."/>
            <person name="Kratchmarova I."/>
            <person name="Kassem M."/>
            <person name="Mann M."/>
            <person name="Olsen J.V."/>
            <person name="Blagoev B."/>
        </authorList>
    </citation>
    <scope>IDENTIFICATION BY MASS SPECTROMETRY [LARGE SCALE ANALYSIS]</scope>
</reference>
<reference key="21">
    <citation type="journal article" date="2012" name="Proc. Natl. Acad. Sci. U.S.A.">
        <title>N-terminal acetylome analyses and functional insights of the N-terminal acetyltransferase NatB.</title>
        <authorList>
            <person name="Van Damme P."/>
            <person name="Lasa M."/>
            <person name="Polevoda B."/>
            <person name="Gazquez C."/>
            <person name="Elosegui-Artola A."/>
            <person name="Kim D.S."/>
            <person name="De Juan-Pardo E."/>
            <person name="Demeyer K."/>
            <person name="Hole K."/>
            <person name="Larrea E."/>
            <person name="Timmerman E."/>
            <person name="Prieto J."/>
            <person name="Arnesen T."/>
            <person name="Sherman F."/>
            <person name="Gevaert K."/>
            <person name="Aldabe R."/>
        </authorList>
    </citation>
    <scope>ACETYLATION [LARGE SCALE ANALYSIS] AT ALA-2</scope>
    <scope>CLEAVAGE OF INITIATOR METHIONINE [LARGE SCALE ANALYSIS]</scope>
    <scope>IDENTIFICATION BY MASS SPECTROMETRY [LARGE SCALE ANALYSIS]</scope>
</reference>
<reference key="22">
    <citation type="journal article" date="2013" name="J. Proteome Res.">
        <title>Toward a comprehensive characterization of a human cancer cell phosphoproteome.</title>
        <authorList>
            <person name="Zhou H."/>
            <person name="Di Palma S."/>
            <person name="Preisinger C."/>
            <person name="Peng M."/>
            <person name="Polat A.N."/>
            <person name="Heck A.J."/>
            <person name="Mohammed S."/>
        </authorList>
    </citation>
    <scope>PHOSPHORYLATION [LARGE SCALE ANALYSIS] AT SER-433; SER-613 AND SER-624</scope>
    <scope>IDENTIFICATION BY MASS SPECTROMETRY [LARGE SCALE ANALYSIS]</scope>
    <source>
        <tissue>Cervix carcinoma</tissue>
        <tissue>Erythroleukemia</tissue>
    </source>
</reference>
<reference key="23">
    <citation type="journal article" date="2014" name="J. Proteomics">
        <title>An enzyme assisted RP-RPLC approach for in-depth analysis of human liver phosphoproteome.</title>
        <authorList>
            <person name="Bian Y."/>
            <person name="Song C."/>
            <person name="Cheng K."/>
            <person name="Dong M."/>
            <person name="Wang F."/>
            <person name="Huang J."/>
            <person name="Sun D."/>
            <person name="Wang L."/>
            <person name="Ye M."/>
            <person name="Zou H."/>
        </authorList>
    </citation>
    <scope>PHOSPHORYLATION [LARGE SCALE ANALYSIS] AT SER-90 AND SER-613</scope>
    <scope>IDENTIFICATION BY MASS SPECTROMETRY [LARGE SCALE ANALYSIS]</scope>
    <source>
        <tissue>Liver</tissue>
    </source>
</reference>
<reference key="24">
    <citation type="journal article" date="2017" name="Nat. Struct. Mol. Biol.">
        <title>Site-specific mapping of the human SUMO proteome reveals co-modification with phosphorylation.</title>
        <authorList>
            <person name="Hendriks I.A."/>
            <person name="Lyon D."/>
            <person name="Young C."/>
            <person name="Jensen L.J."/>
            <person name="Vertegaal A.C."/>
            <person name="Nielsen M.L."/>
        </authorList>
    </citation>
    <scope>SUMOYLATION [LARGE SCALE ANALYSIS] AT LYS-234</scope>
    <scope>IDENTIFICATION BY MASS SPECTROMETRY [LARGE SCALE ANALYSIS]</scope>
</reference>
<reference key="25">
    <citation type="journal article" date="2018" name="IScience">
        <title>Mitogenic Signals Stimulate the CREB Coactivator CRTC3 through PP2A Recruitment.</title>
        <authorList>
            <person name="Sonntag T."/>
            <person name="Ostojic J."/>
            <person name="Vaughan J.M."/>
            <person name="Moresco J.J."/>
            <person name="Yoon Y.S."/>
            <person name="Yates J.R. III"/>
            <person name="Montminy M."/>
        </authorList>
    </citation>
    <scope>INTERACTION WITH YWHAE AND PPP3CA</scope>
</reference>
<reference key="26">
    <citation type="journal article" date="2008" name="Mol. Genet. Metab.">
        <title>Single nucleotide polymorphisms in genes encoding LKB1 (STK11), TORC2 (CRTC2) and AMPK alpha2-subunit (PRKAA2) and risk of type 2 diabetes.</title>
        <authorList>
            <person name="Keshavarz P."/>
            <person name="Inoue H."/>
            <person name="Nakamura N."/>
            <person name="Yoshikawa T."/>
            <person name="Tanahashi T."/>
            <person name="Itakura M."/>
        </authorList>
    </citation>
    <scope>VARIANT CYS-379</scope>
    <scope>INVOLVEMENT IN SUSCEPTIBILITY TO NIDDM</scope>
</reference>
<comment type="function">
    <text evidence="4 5 6 8 9 10 11">Transcriptional coactivator for CREB1 which activates transcription through both consensus and variant cAMP response element (CRE) sites. Acts as a coactivator, in the SIK/TORC signaling pathway, being active when dephosphorylated and acts independently of CREB1 'Ser-133' phosphorylation. Enhances the interaction of CREB1 with TAF4. Regulates gluconeogenesis as a component of the LKB1/AMPK/TORC2 signaling pathway. Regulates the expression of specific genes such as the steroidogenic gene, StAR. Potent coactivator of PPARGC1A and inducer of mitochondrial biogenesis in muscle cells. Also coactivator for TAX activation of the human T-cell leukemia virus type 1 (HTLV-1) long terminal repeats (LTR).</text>
</comment>
<comment type="subunit">
    <text evidence="2 6 13 14">Binds, as a tetramer, through its N-terminal region, with the bZIP domain of CREB1 (PubMed:15454081). 'Arg-314' in the bZIP domain of CREB1 is essential for this interaction (PubMed:15454081). Interaction, via its C-terminal, with TAF4, enhances recruitment of TAF4 to CREB1 (PubMed:15454081). Interacts with SIK2 (PubMed:15454081). Interacts with 14-3-3 proteins, YWHAB and YWHAG (PubMed:15454081, PubMed:18626018). Interacts (probably when phosphorylated at Ser-171) with YWHAE (PubMed:30611118). Interacts with calmodulin-dependent catalytic subunit PPP3CA/calcineurin A (PubMed:15454081, PubMed:30611118). Interaction with COP1 mediates nuclear export and degradation of CRTC2 (By similarity).</text>
</comment>
<comment type="subunit">
    <text evidence="8">(Microbial infection) Interaction with the human T-cell leukemia virus type 1 (HTLV-1) Tax protein is essential for optimal transcription activation by Tax.</text>
</comment>
<comment type="interaction">
    <interactant intactId="EBI-1181987">
        <id>Q53ET0</id>
    </interactant>
    <interactant intactId="EBI-852157">
        <id>P18850</id>
        <label>ATF6</label>
    </interactant>
    <organismsDiffer>false</organismsDiffer>
    <experiments>3</experiments>
</comment>
<comment type="interaction">
    <interactant intactId="EBI-1181987">
        <id>Q53ET0</id>
    </interactant>
    <interactant intactId="EBI-1166928">
        <id>Q8N5M1</id>
        <label>ATPAF2</label>
    </interactant>
    <organismsDiffer>false</organismsDiffer>
    <experiments>3</experiments>
</comment>
<comment type="interaction">
    <interactant intactId="EBI-1181987">
        <id>Q53ET0</id>
    </interactant>
    <interactant intactId="EBI-10961624">
        <id>Q2TAC2-2</id>
        <label>CCDC57</label>
    </interactant>
    <organismsDiffer>false</organismsDiffer>
    <experiments>3</experiments>
</comment>
<comment type="interaction">
    <interactant intactId="EBI-1181987">
        <id>Q53ET0</id>
    </interactant>
    <interactant intactId="EBI-396137">
        <id>Q9UJX2</id>
        <label>CDC23</label>
    </interactant>
    <organismsDiffer>false</organismsDiffer>
    <experiments>3</experiments>
</comment>
<comment type="interaction">
    <interactant intactId="EBI-1181987">
        <id>Q53ET0</id>
    </interactant>
    <interactant intactId="EBI-711855">
        <id>P16220</id>
        <label>CREB1</label>
    </interactant>
    <organismsDiffer>false</organismsDiffer>
    <experiments>3</experiments>
</comment>
<comment type="interaction">
    <interactant intactId="EBI-1181987">
        <id>Q53ET0</id>
    </interactant>
    <interactant intactId="EBI-350527">
        <id>Q15233</id>
        <label>NONO</label>
    </interactant>
    <organismsDiffer>false</organismsDiffer>
    <experiments>2</experiments>
</comment>
<comment type="interaction">
    <interactant intactId="EBI-1181987">
        <id>Q53ET0</id>
    </interactant>
    <interactant intactId="EBI-740595">
        <id>Q9UMX1</id>
        <label>SUFU</label>
    </interactant>
    <organismsDiffer>false</organismsDiffer>
    <experiments>5</experiments>
</comment>
<comment type="interaction">
    <interactant intactId="EBI-1181987">
        <id>Q53ET0</id>
    </interactant>
    <interactant intactId="EBI-359815">
        <id>P31946</id>
        <label>YWHAB</label>
    </interactant>
    <organismsDiffer>false</organismsDiffer>
    <experiments>6</experiments>
</comment>
<comment type="interaction">
    <interactant intactId="EBI-1181987">
        <id>Q53ET0</id>
    </interactant>
    <interactant intactId="EBI-2621186">
        <id>P03206</id>
        <label>BZLF1</label>
    </interactant>
    <organismsDiffer>true</organismsDiffer>
    <experiments>3</experiments>
</comment>
<comment type="subcellular location">
    <subcellularLocation>
        <location evidence="7">Cytoplasm</location>
    </subcellularLocation>
    <subcellularLocation>
        <location evidence="7">Nucleus</location>
    </subcellularLocation>
    <text evidence="6">Translocated from the nucleus to the cytoplasm on interaction of the phosphorylated form with 14-3-3 protein (PubMed:15454081). In response to cAMP levels and glucagon, relocated to the nucleus (PubMed:15454081).</text>
</comment>
<comment type="tissue specificity">
    <text evidence="5 6 10">Most abundantly expressed in the thymus. Present in both B and T-lymphocytes. Highly expressed in HEK293T cells and in insulinomas. High levels also in spleen, ovary, muscle and lung, with highest levels in muscle. Lower levels found in brain, colon, heart, kidney, prostate, small intestine and stomach. Weak expression in liver and pancreas.</text>
</comment>
<comment type="PTM">
    <text evidence="2 6 7 9 11 13">Phosphorylation/dephosphorylation states of Ser-171 are required for regulating transduction of CREB activity (PubMed:15589160, PubMed:17210223). CRTCs/TORCs are inactive when phosphorylated, and active when dephosphorylated at this site (PubMed:17210223). This primary site of phosphorylation, is regulated by cAMP and calcium levels and is dependent on the phosphorylation of SIKs (SIK1 and SIK2) by LKB1 (PubMed:15454081, PubMed:16817901). Following adenylyl cyclase activation, dephosphorylated at Ser-171 by PPP3CA/calcineurin A resulting in CRTC2 dissociation from 14-3-3 proteins and PPP3CA (By similarity). Both insulin and AMPK increase this phosphorylation of CRTC2 while glucagon suppresses it (PubMed:15454081). Phosphorylation at Ser-274 by MARK2 is induced under low glucose conditions and dephosphorylated in response to glucose influx (PubMed:18626018). Phosphorylation at Ser-274 promotes interaction with 14-3-3 proteins and translocation to the cytoplasm (PubMed:18626018).</text>
</comment>
<comment type="PTM">
    <text evidence="2">Asymmetric dimethylation of arginine resisues by PRMT6 enhances the association of CRTC2 with CREB on the promoters of gluconeogenic genes.</text>
</comment>
<comment type="polymorphism">
    <text evidence="12">Variant Cys-379, under a dominant model, linked to a recessive mutation in LKB1, may be associated with susceptibility to type II or non-insulin-dependent diabetes mellitus (NIDDM).</text>
</comment>
<comment type="similarity">
    <text evidence="15">Belongs to the TORC family.</text>
</comment>
<comment type="online information" name="Atlas of Genetics and Cytogenetics in Oncology and Haematology">
    <link uri="https://atlasgeneticsoncology.org/gene/50581/CRTC2"/>
</comment>
<gene>
    <name type="primary">CRTC2</name>
    <name type="synonym">TORC2</name>
</gene>
<evidence type="ECO:0000250" key="1"/>
<evidence type="ECO:0000250" key="2">
    <source>
        <dbReference type="UniProtKB" id="Q3U182"/>
    </source>
</evidence>
<evidence type="ECO:0000256" key="3">
    <source>
        <dbReference type="SAM" id="MobiDB-lite"/>
    </source>
</evidence>
<evidence type="ECO:0000269" key="4">
    <source>
    </source>
</evidence>
<evidence type="ECO:0000269" key="5">
    <source>
    </source>
</evidence>
<evidence type="ECO:0000269" key="6">
    <source>
    </source>
</evidence>
<evidence type="ECO:0000269" key="7">
    <source>
    </source>
</evidence>
<evidence type="ECO:0000269" key="8">
    <source>
    </source>
</evidence>
<evidence type="ECO:0000269" key="9">
    <source>
    </source>
</evidence>
<evidence type="ECO:0000269" key="10">
    <source>
    </source>
</evidence>
<evidence type="ECO:0000269" key="11">
    <source>
    </source>
</evidence>
<evidence type="ECO:0000269" key="12">
    <source>
    </source>
</evidence>
<evidence type="ECO:0000269" key="13">
    <source>
    </source>
</evidence>
<evidence type="ECO:0000269" key="14">
    <source>
    </source>
</evidence>
<evidence type="ECO:0000305" key="15"/>
<evidence type="ECO:0007744" key="16">
    <source>
    </source>
</evidence>
<evidence type="ECO:0007744" key="17">
    <source>
    </source>
</evidence>
<evidence type="ECO:0007744" key="18">
    <source>
    </source>
</evidence>
<evidence type="ECO:0007744" key="19">
    <source>
    </source>
</evidence>
<evidence type="ECO:0007744" key="20">
    <source>
    </source>
</evidence>
<evidence type="ECO:0007744" key="21">
    <source>
    </source>
</evidence>
<evidence type="ECO:0007744" key="22">
    <source>
    </source>
</evidence>
<evidence type="ECO:0007744" key="23">
    <source>
    </source>
</evidence>
<evidence type="ECO:0007744" key="24">
    <source>
    </source>
</evidence>
<evidence type="ECO:0007744" key="25">
    <source>
    </source>
</evidence>
<evidence type="ECO:0007829" key="26">
    <source>
        <dbReference type="PDB" id="4HTM"/>
    </source>
</evidence>
<sequence>MATSGANGPGSATASASNPRKFSEKIALQKQRQAEETAAFEEVMMDIGSTRLQAQKLRLAYTRSSHYGGSLPNVNQIGSGLAEFQSPLHSPLDSSRSTRHHGLVERVQRDPRRMVSPLRRYTRHIDSSPYSPAYLSPPPESSWRRTMAWGNFPAEKGQLFRLPSALNRTSSDSALHTSVMNPSPQDTYPGPTPPSILPSRRGGILDGEMDPKVPAIEENLLDDKHLLKPWDAKKLSSSSSRPRSCEVPGINIFPSPDQPANVPVLPPAMNTGGSLPDLTNLHFPPPLPTPLDPEETAYPSLSGGNSTSNLTHTMTHLGISRGMGLGPGYDAPGLHSPLSHPSLQSSLSNPNLQASLSSPQPQLQGSHSHPSLPASSLARHVLPTTSLGHPSLSAPALSSSSSSSSTSSPVLGAPSYPASTPGASPHHRRVPLSPLSLLAGPADARRSQQQLPKQFSPTMSPTLSSITQGVPLDTSKLSTDQRLPPYPYSSPSLVLPTQPHTPKSLQQPGLPSQSCSVQSSGGQPPGRQSHYGTPYPPGPSGHGQQSYHRPMSDFNLGNLEQFSMESPSASLVLDPPGFSEGPGFLGGEGPMGGPQDPHTFNHQNLTHCSRHGSGPNIILTGDSSPGFSKEIAAALAGVPGFEVSAAGLELGLGLEDELRMEPLGLEGLNMLSDPCALLPDPAVEESFRSDRLQ</sequence>
<feature type="initiator methionine" description="Removed" evidence="19 22">
    <location>
        <position position="1"/>
    </location>
</feature>
<feature type="chain" id="PRO_0000318528" description="CREB-regulated transcription coactivator 2">
    <location>
        <begin position="2"/>
        <end position="693"/>
    </location>
</feature>
<feature type="region of interest" description="Disordered" evidence="3">
    <location>
        <begin position="1"/>
        <end position="30"/>
    </location>
</feature>
<feature type="region of interest" description="Disordered" evidence="3">
    <location>
        <begin position="282"/>
        <end position="306"/>
    </location>
</feature>
<feature type="region of interest" description="Disordered" evidence="3">
    <location>
        <begin position="328"/>
        <end position="554"/>
    </location>
</feature>
<feature type="short sequence motif" description="Nuclear export signal" evidence="1">
    <location>
        <begin position="271"/>
        <end position="287"/>
    </location>
</feature>
<feature type="compositionally biased region" description="Polar residues" evidence="3">
    <location>
        <begin position="1"/>
        <end position="20"/>
    </location>
</feature>
<feature type="compositionally biased region" description="Low complexity" evidence="3">
    <location>
        <begin position="331"/>
        <end position="378"/>
    </location>
</feature>
<feature type="compositionally biased region" description="Low complexity" evidence="3">
    <location>
        <begin position="386"/>
        <end position="415"/>
    </location>
</feature>
<feature type="compositionally biased region" description="Polar residues" evidence="3">
    <location>
        <begin position="447"/>
        <end position="468"/>
    </location>
</feature>
<feature type="compositionally biased region" description="Polar residues" evidence="3">
    <location>
        <begin position="498"/>
        <end position="507"/>
    </location>
</feature>
<feature type="compositionally biased region" description="Low complexity" evidence="3">
    <location>
        <begin position="509"/>
        <end position="529"/>
    </location>
</feature>
<feature type="site" description="Required for ubiquitination and degradation" evidence="1">
    <location>
        <position position="629"/>
    </location>
</feature>
<feature type="modified residue" description="N-acetylalanine" evidence="19 22">
    <location>
        <position position="2"/>
    </location>
</feature>
<feature type="modified residue" description="Asymmetric dimethylarginine; by PRMT6" evidence="2">
    <location>
        <position position="51"/>
    </location>
</feature>
<feature type="modified residue" description="Phosphoserine" evidence="6 18 20">
    <location>
        <position position="70"/>
    </location>
</feature>
<feature type="modified residue" description="Phosphoserine" evidence="18 20">
    <location>
        <position position="86"/>
    </location>
</feature>
<feature type="modified residue" description="Phosphoserine" evidence="6 18 20 24">
    <location>
        <position position="90"/>
    </location>
</feature>
<feature type="modified residue" description="Asymmetric dimethylarginine; by PRMT6" evidence="2">
    <location>
        <position position="99"/>
    </location>
</feature>
<feature type="modified residue" description="Asymmetric dimethylarginine; by PRMT6" evidence="2">
    <location>
        <position position="120"/>
    </location>
</feature>
<feature type="modified residue" description="Asymmetric dimethylarginine; by PRMT6" evidence="2">
    <location>
        <position position="123"/>
    </location>
</feature>
<feature type="modified residue" description="Phosphoserine" evidence="6 18">
    <location>
        <position position="136"/>
    </location>
</feature>
<feature type="modified residue" description="Asymmetric dimethylarginine; by PRMT6" evidence="2">
    <location>
        <position position="161"/>
    </location>
</feature>
<feature type="modified residue" description="Asymmetric dimethylarginine; by PRMT6" evidence="2">
    <location>
        <position position="168"/>
    </location>
</feature>
<feature type="modified residue" description="Phosphothreonine" evidence="2">
    <location>
        <position position="169"/>
    </location>
</feature>
<feature type="modified residue" description="Phosphoserine; by AMPK, MARK2, SIK1 and SIK2" evidence="6 9 11 13">
    <location>
        <position position="171"/>
    </location>
</feature>
<feature type="modified residue" description="Phosphothreonine" evidence="20">
    <location>
        <position position="192"/>
    </location>
</feature>
<feature type="modified residue" description="Phosphoserine; by MARK2" evidence="13">
    <location>
        <position position="274"/>
    </location>
</feature>
<feature type="modified residue" description="Phosphoserine" evidence="6">
    <location>
        <position position="306"/>
    </location>
</feature>
<feature type="modified residue" description="Phosphoserine" evidence="6">
    <location>
        <position position="368"/>
    </location>
</feature>
<feature type="modified residue" description="Phosphoserine" evidence="6">
    <location>
        <position position="393"/>
    </location>
</feature>
<feature type="modified residue" description="Phosphoserine" evidence="6 16 17 18 20 23">
    <location>
        <position position="433"/>
    </location>
</feature>
<feature type="modified residue" description="Phosphoserine" evidence="6">
    <location>
        <position position="456"/>
    </location>
</feature>
<feature type="modified residue" description="Phosphotyrosine" evidence="20">
    <location>
        <position position="488"/>
    </location>
</feature>
<feature type="modified residue" description="Phosphoserine" evidence="6">
    <location>
        <position position="489"/>
    </location>
</feature>
<feature type="modified residue" description="Phosphoserine" evidence="20">
    <location>
        <position position="490"/>
    </location>
</feature>
<feature type="modified residue" description="Phosphoserine" evidence="6">
    <location>
        <position position="492"/>
    </location>
</feature>
<feature type="modified residue" description="Phosphothreonine" evidence="18 21">
    <location>
        <position position="501"/>
    </location>
</feature>
<feature type="modified residue" description="Phosphoserine" evidence="6 18 20 21 23 24">
    <location>
        <position position="613"/>
    </location>
</feature>
<feature type="modified residue" description="Phosphoserine" evidence="2">
    <location>
        <position position="623"/>
    </location>
</feature>
<feature type="modified residue" description="Phosphoserine" evidence="18 20 21 23">
    <location>
        <position position="624"/>
    </location>
</feature>
<feature type="cross-link" description="Glycyl lysine isopeptide (Lys-Gly) (interchain with G-Cter in SUMO2)" evidence="25">
    <location>
        <position position="234"/>
    </location>
</feature>
<feature type="sequence variant" id="VAR_038756" description="In dbSNP:rs11264680.">
    <original>M</original>
    <variation>V</variation>
    <location>
        <position position="147"/>
    </location>
</feature>
<feature type="sequence variant" id="VAR_038757" description="In dbSNP:rs150423770." evidence="4 12">
    <original>R</original>
    <variation>C</variation>
    <location>
        <position position="379"/>
    </location>
</feature>
<feature type="mutagenesis site" description="No effect on cAMP- and calcium-regulated phosphorylation.">
    <original>S</original>
    <variation>A</variation>
    <location>
        <position position="70"/>
    </location>
</feature>
<feature type="mutagenesis site" description="Loss of cAMP- and calcium-regulated phosphorylation. Greatly reduced interaction with 14-3-3 proteins. Impaired phosphorylation under low glucose conditions and impaired interaction with 14-3-3 proteins; when associated with A-274." evidence="6 9 13">
    <original>S</original>
    <variation>A</variation>
    <location>
        <position position="171"/>
    </location>
</feature>
<feature type="mutagenesis site" description="Impaired phosphorylation under low glucose conditions and impaired interaction with 14-3-3 proteins; when associated with A-171." evidence="13">
    <original>S</original>
    <variation>A</variation>
    <location>
        <position position="274"/>
    </location>
</feature>
<feature type="mutagenesis site" description="Reduced cAMP- and calcium-regulated phosphorylation." evidence="6 13">
    <original>S</original>
    <variation>A</variation>
    <location>
        <position position="368"/>
    </location>
</feature>
<feature type="mutagenesis site" description="No effect on cAMP- and calcium-regulated phosphorylation.">
    <original>S</original>
    <variation>A</variation>
    <location>
        <position position="393"/>
    </location>
</feature>
<feature type="sequence conflict" description="In Ref. 1; AAQ98857." evidence="15" ref="1">
    <original>MGL</original>
    <variation>HGP</variation>
    <location>
        <begin position="323"/>
        <end position="325"/>
    </location>
</feature>
<feature type="sequence conflict" description="In Ref. 2; BAD97279." evidence="15" ref="2">
    <original>P</original>
    <variation>S</variation>
    <location>
        <position position="499"/>
    </location>
</feature>
<feature type="helix" evidence="26">
    <location>
        <begin position="21"/>
        <end position="45"/>
    </location>
</feature>
<accession>Q53ET0</accession>
<accession>Q6UUV8</accession>
<accession>Q7Z3X7</accession>
<accession>Q8N332</accession>
<name>CRTC2_HUMAN</name>
<protein>
    <recommendedName>
        <fullName>CREB-regulated transcription coactivator 2</fullName>
    </recommendedName>
    <alternativeName>
        <fullName>Transducer of regulated cAMP response element-binding protein 2</fullName>
        <shortName>TORC-2</shortName>
        <shortName>Transducer of CREB protein 2</shortName>
    </alternativeName>
</protein>
<keyword id="KW-0002">3D-structure</keyword>
<keyword id="KW-0007">Acetylation</keyword>
<keyword id="KW-0010">Activator</keyword>
<keyword id="KW-0963">Cytoplasm</keyword>
<keyword id="KW-0945">Host-virus interaction</keyword>
<keyword id="KW-1017">Isopeptide bond</keyword>
<keyword id="KW-0488">Methylation</keyword>
<keyword id="KW-0539">Nucleus</keyword>
<keyword id="KW-0597">Phosphoprotein</keyword>
<keyword id="KW-1267">Proteomics identification</keyword>
<keyword id="KW-1185">Reference proteome</keyword>
<keyword id="KW-0804">Transcription</keyword>
<keyword id="KW-0805">Transcription regulation</keyword>
<keyword id="KW-0832">Ubl conjugation</keyword>
<organism>
    <name type="scientific">Homo sapiens</name>
    <name type="common">Human</name>
    <dbReference type="NCBI Taxonomy" id="9606"/>
    <lineage>
        <taxon>Eukaryota</taxon>
        <taxon>Metazoa</taxon>
        <taxon>Chordata</taxon>
        <taxon>Craniata</taxon>
        <taxon>Vertebrata</taxon>
        <taxon>Euteleostomi</taxon>
        <taxon>Mammalia</taxon>
        <taxon>Eutheria</taxon>
        <taxon>Euarchontoglires</taxon>
        <taxon>Primates</taxon>
        <taxon>Haplorrhini</taxon>
        <taxon>Catarrhini</taxon>
        <taxon>Hominidae</taxon>
        <taxon>Homo</taxon>
    </lineage>
</organism>